<dbReference type="EC" id="6.3.2.1" evidence="1"/>
<dbReference type="EMBL" id="CP001390">
    <property type="protein sequence ID" value="ACM21220.1"/>
    <property type="molecule type" value="Genomic_DNA"/>
</dbReference>
<dbReference type="RefSeq" id="WP_012647948.1">
    <property type="nucleotide sequence ID" value="NC_011979.1"/>
</dbReference>
<dbReference type="SMR" id="B9M2A2"/>
<dbReference type="STRING" id="316067.Geob_2876"/>
<dbReference type="KEGG" id="geo:Geob_2876"/>
<dbReference type="eggNOG" id="COG0414">
    <property type="taxonomic scope" value="Bacteria"/>
</dbReference>
<dbReference type="HOGENOM" id="CLU_047148_0_0_7"/>
<dbReference type="OrthoDB" id="9773087at2"/>
<dbReference type="UniPathway" id="UPA00028">
    <property type="reaction ID" value="UER00005"/>
</dbReference>
<dbReference type="Proteomes" id="UP000007721">
    <property type="component" value="Chromosome"/>
</dbReference>
<dbReference type="GO" id="GO:0005829">
    <property type="term" value="C:cytosol"/>
    <property type="evidence" value="ECO:0007669"/>
    <property type="project" value="TreeGrafter"/>
</dbReference>
<dbReference type="GO" id="GO:0005524">
    <property type="term" value="F:ATP binding"/>
    <property type="evidence" value="ECO:0007669"/>
    <property type="project" value="UniProtKB-KW"/>
</dbReference>
<dbReference type="GO" id="GO:0004592">
    <property type="term" value="F:pantoate-beta-alanine ligase activity"/>
    <property type="evidence" value="ECO:0007669"/>
    <property type="project" value="UniProtKB-UniRule"/>
</dbReference>
<dbReference type="GO" id="GO:0015940">
    <property type="term" value="P:pantothenate biosynthetic process"/>
    <property type="evidence" value="ECO:0007669"/>
    <property type="project" value="UniProtKB-UniRule"/>
</dbReference>
<dbReference type="CDD" id="cd00560">
    <property type="entry name" value="PanC"/>
    <property type="match status" value="1"/>
</dbReference>
<dbReference type="FunFam" id="3.40.50.620:FF:000114">
    <property type="entry name" value="Pantothenate synthetase"/>
    <property type="match status" value="1"/>
</dbReference>
<dbReference type="Gene3D" id="3.40.50.620">
    <property type="entry name" value="HUPs"/>
    <property type="match status" value="1"/>
</dbReference>
<dbReference type="Gene3D" id="3.30.1300.10">
    <property type="entry name" value="Pantoate-beta-alanine ligase, C-terminal domain"/>
    <property type="match status" value="1"/>
</dbReference>
<dbReference type="HAMAP" id="MF_00158">
    <property type="entry name" value="PanC"/>
    <property type="match status" value="1"/>
</dbReference>
<dbReference type="InterPro" id="IPR003721">
    <property type="entry name" value="Pantoate_ligase"/>
</dbReference>
<dbReference type="InterPro" id="IPR042176">
    <property type="entry name" value="Pantoate_ligase_C"/>
</dbReference>
<dbReference type="InterPro" id="IPR014729">
    <property type="entry name" value="Rossmann-like_a/b/a_fold"/>
</dbReference>
<dbReference type="NCBIfam" id="TIGR00018">
    <property type="entry name" value="panC"/>
    <property type="match status" value="1"/>
</dbReference>
<dbReference type="PANTHER" id="PTHR21299">
    <property type="entry name" value="CYTIDYLATE KINASE/PANTOATE-BETA-ALANINE LIGASE"/>
    <property type="match status" value="1"/>
</dbReference>
<dbReference type="PANTHER" id="PTHR21299:SF1">
    <property type="entry name" value="PANTOATE--BETA-ALANINE LIGASE"/>
    <property type="match status" value="1"/>
</dbReference>
<dbReference type="Pfam" id="PF02569">
    <property type="entry name" value="Pantoate_ligase"/>
    <property type="match status" value="1"/>
</dbReference>
<dbReference type="SUPFAM" id="SSF52374">
    <property type="entry name" value="Nucleotidylyl transferase"/>
    <property type="match status" value="1"/>
</dbReference>
<sequence>MELIQCIDEMQSIAQAARANGKRIALVPTMGYLHQGHASLMVEGQKRADLLVASIFVNPTQFGVGEDFDSYPRDMENDMRIAEAAGVDLIFAPRAADMYPADYQTYVNVEELTLPLCGANRPGHFRGVTTVVAKFFNIVSPHVALFGQKDYQQLAVIRQMVADLNMPVEVIGMPIVREADGLAMSSRNSYLSPAERVSALCLSNSLNAVRTAFCKGERSVAALKNLVLDMISKERCAAIDYVEFRHGLNLAAVDTADEQTVVALAVKIGKTRLIDNRVLGEE</sequence>
<reference key="1">
    <citation type="submission" date="2009-01" db="EMBL/GenBank/DDBJ databases">
        <title>Complete sequence of Geobacter sp. FRC-32.</title>
        <authorList>
            <consortium name="US DOE Joint Genome Institute"/>
            <person name="Lucas S."/>
            <person name="Copeland A."/>
            <person name="Lapidus A."/>
            <person name="Glavina del Rio T."/>
            <person name="Dalin E."/>
            <person name="Tice H."/>
            <person name="Bruce D."/>
            <person name="Goodwin L."/>
            <person name="Pitluck S."/>
            <person name="Saunders E."/>
            <person name="Brettin T."/>
            <person name="Detter J.C."/>
            <person name="Han C."/>
            <person name="Larimer F."/>
            <person name="Land M."/>
            <person name="Hauser L."/>
            <person name="Kyrpides N."/>
            <person name="Ovchinnikova G."/>
            <person name="Kostka J."/>
            <person name="Richardson P."/>
        </authorList>
    </citation>
    <scope>NUCLEOTIDE SEQUENCE [LARGE SCALE GENOMIC DNA]</scope>
    <source>
        <strain>DSM 22248 / JCM 15807 / FRC-32</strain>
    </source>
</reference>
<gene>
    <name evidence="1" type="primary">panC</name>
    <name type="ordered locus">Geob_2876</name>
</gene>
<name>PANC_GEODF</name>
<keyword id="KW-0067">ATP-binding</keyword>
<keyword id="KW-0963">Cytoplasm</keyword>
<keyword id="KW-0436">Ligase</keyword>
<keyword id="KW-0547">Nucleotide-binding</keyword>
<keyword id="KW-0566">Pantothenate biosynthesis</keyword>
<keyword id="KW-1185">Reference proteome</keyword>
<comment type="function">
    <text evidence="1">Catalyzes the condensation of pantoate with beta-alanine in an ATP-dependent reaction via a pantoyl-adenylate intermediate.</text>
</comment>
<comment type="catalytic activity">
    <reaction evidence="1">
        <text>(R)-pantoate + beta-alanine + ATP = (R)-pantothenate + AMP + diphosphate + H(+)</text>
        <dbReference type="Rhea" id="RHEA:10912"/>
        <dbReference type="ChEBI" id="CHEBI:15378"/>
        <dbReference type="ChEBI" id="CHEBI:15980"/>
        <dbReference type="ChEBI" id="CHEBI:29032"/>
        <dbReference type="ChEBI" id="CHEBI:30616"/>
        <dbReference type="ChEBI" id="CHEBI:33019"/>
        <dbReference type="ChEBI" id="CHEBI:57966"/>
        <dbReference type="ChEBI" id="CHEBI:456215"/>
        <dbReference type="EC" id="6.3.2.1"/>
    </reaction>
</comment>
<comment type="pathway">
    <text evidence="1">Cofactor biosynthesis; (R)-pantothenate biosynthesis; (R)-pantothenate from (R)-pantoate and beta-alanine: step 1/1.</text>
</comment>
<comment type="subunit">
    <text evidence="1">Homodimer.</text>
</comment>
<comment type="subcellular location">
    <subcellularLocation>
        <location evidence="1">Cytoplasm</location>
    </subcellularLocation>
</comment>
<comment type="miscellaneous">
    <text evidence="1">The reaction proceeds by a bi uni uni bi ping pong mechanism.</text>
</comment>
<comment type="similarity">
    <text evidence="1">Belongs to the pantothenate synthetase family.</text>
</comment>
<accession>B9M2A2</accession>
<organism>
    <name type="scientific">Geotalea daltonii (strain DSM 22248 / JCM 15807 / FRC-32)</name>
    <name type="common">Geobacter daltonii</name>
    <dbReference type="NCBI Taxonomy" id="316067"/>
    <lineage>
        <taxon>Bacteria</taxon>
        <taxon>Pseudomonadati</taxon>
        <taxon>Thermodesulfobacteriota</taxon>
        <taxon>Desulfuromonadia</taxon>
        <taxon>Geobacterales</taxon>
        <taxon>Geobacteraceae</taxon>
        <taxon>Geotalea</taxon>
    </lineage>
</organism>
<evidence type="ECO:0000255" key="1">
    <source>
        <dbReference type="HAMAP-Rule" id="MF_00158"/>
    </source>
</evidence>
<protein>
    <recommendedName>
        <fullName evidence="1">Pantothenate synthetase</fullName>
        <shortName evidence="1">PS</shortName>
        <ecNumber evidence="1">6.3.2.1</ecNumber>
    </recommendedName>
    <alternativeName>
        <fullName evidence="1">Pantoate--beta-alanine ligase</fullName>
    </alternativeName>
    <alternativeName>
        <fullName evidence="1">Pantoate-activating enzyme</fullName>
    </alternativeName>
</protein>
<feature type="chain" id="PRO_1000123415" description="Pantothenate synthetase">
    <location>
        <begin position="1"/>
        <end position="282"/>
    </location>
</feature>
<feature type="active site" description="Proton donor" evidence="1">
    <location>
        <position position="37"/>
    </location>
</feature>
<feature type="binding site" evidence="1">
    <location>
        <begin position="30"/>
        <end position="37"/>
    </location>
    <ligand>
        <name>ATP</name>
        <dbReference type="ChEBI" id="CHEBI:30616"/>
    </ligand>
</feature>
<feature type="binding site" evidence="1">
    <location>
        <position position="61"/>
    </location>
    <ligand>
        <name>(R)-pantoate</name>
        <dbReference type="ChEBI" id="CHEBI:15980"/>
    </ligand>
</feature>
<feature type="binding site" evidence="1">
    <location>
        <position position="61"/>
    </location>
    <ligand>
        <name>beta-alanine</name>
        <dbReference type="ChEBI" id="CHEBI:57966"/>
    </ligand>
</feature>
<feature type="binding site" evidence="1">
    <location>
        <begin position="147"/>
        <end position="150"/>
    </location>
    <ligand>
        <name>ATP</name>
        <dbReference type="ChEBI" id="CHEBI:30616"/>
    </ligand>
</feature>
<feature type="binding site" evidence="1">
    <location>
        <position position="153"/>
    </location>
    <ligand>
        <name>(R)-pantoate</name>
        <dbReference type="ChEBI" id="CHEBI:15980"/>
    </ligand>
</feature>
<feature type="binding site" evidence="1">
    <location>
        <position position="176"/>
    </location>
    <ligand>
        <name>ATP</name>
        <dbReference type="ChEBI" id="CHEBI:30616"/>
    </ligand>
</feature>
<feature type="binding site" evidence="1">
    <location>
        <begin position="184"/>
        <end position="187"/>
    </location>
    <ligand>
        <name>ATP</name>
        <dbReference type="ChEBI" id="CHEBI:30616"/>
    </ligand>
</feature>
<proteinExistence type="inferred from homology"/>